<protein>
    <recommendedName>
        <fullName evidence="1">Large ribosomal subunit protein uL18</fullName>
    </recommendedName>
    <alternativeName>
        <fullName evidence="2">50S ribosomal protein L18</fullName>
    </alternativeName>
</protein>
<feature type="chain" id="PRO_0000131411" description="Large ribosomal subunit protein uL18">
    <location>
        <begin position="1"/>
        <end position="158"/>
    </location>
</feature>
<gene>
    <name evidence="1" type="primary">rpl18</name>
    <name type="ordered locus">PTO0659</name>
</gene>
<comment type="function">
    <text evidence="1">This is one of the proteins that bind and probably mediate the attachment of the 5S RNA into the large ribosomal subunit, where it forms part of the central protuberance.</text>
</comment>
<comment type="subunit">
    <text evidence="1">Part of the 50S ribosomal subunit. Contacts the 5S and 23S rRNAs.</text>
</comment>
<comment type="similarity">
    <text evidence="1">Belongs to the universal ribosomal protein uL18 family.</text>
</comment>
<evidence type="ECO:0000255" key="1">
    <source>
        <dbReference type="HAMAP-Rule" id="MF_01337"/>
    </source>
</evidence>
<evidence type="ECO:0000305" key="2"/>
<proteinExistence type="inferred from homology"/>
<sequence length="158" mass="17647">MKTPPVLKRRREGVTDYRKRYRLVISRETRAVIRQTRKGLIIQLVDYVPEGDHVLVTVTNKTLKKALNIDGNNIQMYYLAGYMAAKKGISLGISGAVVDTGRAIFRKGGRIAAAIKGLIDGGLEINADEDIFPDESRLNGEHLKQRLDINEIKSKIGE</sequence>
<keyword id="KW-0687">Ribonucleoprotein</keyword>
<keyword id="KW-0689">Ribosomal protein</keyword>
<keyword id="KW-0694">RNA-binding</keyword>
<keyword id="KW-0699">rRNA-binding</keyword>
<accession>Q6L1A8</accession>
<dbReference type="EMBL" id="AE017261">
    <property type="protein sequence ID" value="AAT43244.1"/>
    <property type="molecule type" value="Genomic_DNA"/>
</dbReference>
<dbReference type="RefSeq" id="WP_011177460.1">
    <property type="nucleotide sequence ID" value="NC_005877.1"/>
</dbReference>
<dbReference type="SMR" id="Q6L1A8"/>
<dbReference type="FunCoup" id="Q6L1A8">
    <property type="interactions" value="179"/>
</dbReference>
<dbReference type="STRING" id="263820.PTO0659"/>
<dbReference type="PaxDb" id="263820-PTO0659"/>
<dbReference type="GeneID" id="2844363"/>
<dbReference type="KEGG" id="pto:PTO0659"/>
<dbReference type="eggNOG" id="arCOG04088">
    <property type="taxonomic scope" value="Archaea"/>
</dbReference>
<dbReference type="HOGENOM" id="CLU_056222_2_1_2"/>
<dbReference type="InParanoid" id="Q6L1A8"/>
<dbReference type="OrthoDB" id="8644at2157"/>
<dbReference type="Proteomes" id="UP000000438">
    <property type="component" value="Chromosome"/>
</dbReference>
<dbReference type="GO" id="GO:0022625">
    <property type="term" value="C:cytosolic large ribosomal subunit"/>
    <property type="evidence" value="ECO:0007669"/>
    <property type="project" value="TreeGrafter"/>
</dbReference>
<dbReference type="GO" id="GO:0008097">
    <property type="term" value="F:5S rRNA binding"/>
    <property type="evidence" value="ECO:0007669"/>
    <property type="project" value="InterPro"/>
</dbReference>
<dbReference type="GO" id="GO:0003735">
    <property type="term" value="F:structural constituent of ribosome"/>
    <property type="evidence" value="ECO:0007669"/>
    <property type="project" value="InterPro"/>
</dbReference>
<dbReference type="GO" id="GO:0000027">
    <property type="term" value="P:ribosomal large subunit assembly"/>
    <property type="evidence" value="ECO:0007669"/>
    <property type="project" value="TreeGrafter"/>
</dbReference>
<dbReference type="GO" id="GO:0006412">
    <property type="term" value="P:translation"/>
    <property type="evidence" value="ECO:0007669"/>
    <property type="project" value="UniProtKB-UniRule"/>
</dbReference>
<dbReference type="CDD" id="cd00432">
    <property type="entry name" value="Ribosomal_L18_L5e"/>
    <property type="match status" value="1"/>
</dbReference>
<dbReference type="Gene3D" id="3.30.420.100">
    <property type="match status" value="1"/>
</dbReference>
<dbReference type="HAMAP" id="MF_01337_A">
    <property type="entry name" value="Ribosomal_uL18_A"/>
    <property type="match status" value="1"/>
</dbReference>
<dbReference type="InterPro" id="IPR005485">
    <property type="entry name" value="Rbsml_uL18_euk"/>
</dbReference>
<dbReference type="NCBIfam" id="NF006342">
    <property type="entry name" value="PRK08569.1"/>
    <property type="match status" value="1"/>
</dbReference>
<dbReference type="PANTHER" id="PTHR23410:SF12">
    <property type="entry name" value="LARGE RIBOSOMAL SUBUNIT PROTEIN UL18"/>
    <property type="match status" value="1"/>
</dbReference>
<dbReference type="PANTHER" id="PTHR23410">
    <property type="entry name" value="RIBOSOMAL PROTEIN L5-RELATED"/>
    <property type="match status" value="1"/>
</dbReference>
<dbReference type="Pfam" id="PF17144">
    <property type="entry name" value="Ribosomal_L5e"/>
    <property type="match status" value="1"/>
</dbReference>
<dbReference type="SUPFAM" id="SSF53137">
    <property type="entry name" value="Translational machinery components"/>
    <property type="match status" value="1"/>
</dbReference>
<name>RL18_PICTO</name>
<reference key="1">
    <citation type="journal article" date="2004" name="Proc. Natl. Acad. Sci. U.S.A.">
        <title>Genome sequence of Picrophilus torridus and its implications for life around pH 0.</title>
        <authorList>
            <person name="Fuetterer O."/>
            <person name="Angelov A."/>
            <person name="Liesegang H."/>
            <person name="Gottschalk G."/>
            <person name="Schleper C."/>
            <person name="Schepers B."/>
            <person name="Dock C."/>
            <person name="Antranikian G."/>
            <person name="Liebl W."/>
        </authorList>
    </citation>
    <scope>NUCLEOTIDE SEQUENCE [LARGE SCALE GENOMIC DNA]</scope>
    <source>
        <strain>ATCC 700027 / DSM 9790 / JCM 10055 / NBRC 100828 / KAW 2/3</strain>
    </source>
</reference>
<organism>
    <name type="scientific">Picrophilus torridus (strain ATCC 700027 / DSM 9790 / JCM 10055 / NBRC 100828 / KAW 2/3)</name>
    <dbReference type="NCBI Taxonomy" id="1122961"/>
    <lineage>
        <taxon>Archaea</taxon>
        <taxon>Methanobacteriati</taxon>
        <taxon>Thermoplasmatota</taxon>
        <taxon>Thermoplasmata</taxon>
        <taxon>Thermoplasmatales</taxon>
        <taxon>Picrophilaceae</taxon>
        <taxon>Picrophilus</taxon>
    </lineage>
</organism>